<comment type="function">
    <text evidence="1">TFIIA is a component of the transcription machinery of RNA polymerase II and plays an important role in transcriptional activation. TFIIA in a complex with tbp mediates transcriptional activity (By similarity).</text>
</comment>
<comment type="subunit">
    <text evidence="1">TFIIA is a heterodimer composed of the large toa1 and the small toa2 subunits.</text>
</comment>
<comment type="subcellular location">
    <subcellularLocation>
        <location evidence="1">Nucleus</location>
    </subcellularLocation>
</comment>
<comment type="similarity">
    <text evidence="2">Belongs to the TFIIA subunit 2 family.</text>
</comment>
<organism>
    <name type="scientific">Fusarium vanettenii (strain ATCC MYA-4622 / CBS 123669 / FGSC 9596 / NRRL 45880 / 77-13-4)</name>
    <name type="common">Fusarium solani subsp. pisi</name>
    <dbReference type="NCBI Taxonomy" id="660122"/>
    <lineage>
        <taxon>Eukaryota</taxon>
        <taxon>Fungi</taxon>
        <taxon>Dikarya</taxon>
        <taxon>Ascomycota</taxon>
        <taxon>Pezizomycotina</taxon>
        <taxon>Sordariomycetes</taxon>
        <taxon>Hypocreomycetidae</taxon>
        <taxon>Hypocreales</taxon>
        <taxon>Nectriaceae</taxon>
        <taxon>Fusarium</taxon>
        <taxon>Fusarium solani species complex</taxon>
        <taxon>Fusarium vanettenii</taxon>
    </lineage>
</organism>
<feature type="chain" id="PRO_0000406210" description="Transcription initiation factor IIA subunit 2">
    <location>
        <begin position="1"/>
        <end position="114"/>
    </location>
</feature>
<proteinExistence type="inferred from homology"/>
<gene>
    <name type="primary">toa2</name>
    <name type="ORF">NECHADRAFT_50001</name>
</gene>
<keyword id="KW-0539">Nucleus</keyword>
<keyword id="KW-1185">Reference proteome</keyword>
<keyword id="KW-0804">Transcription</keyword>
<keyword id="KW-0805">Transcription regulation</keyword>
<dbReference type="EMBL" id="GG698970">
    <property type="protein sequence ID" value="EEU34141.1"/>
    <property type="molecule type" value="Genomic_DNA"/>
</dbReference>
<dbReference type="RefSeq" id="XP_003039854.1">
    <property type="nucleotide sequence ID" value="XM_003039808.1"/>
</dbReference>
<dbReference type="SMR" id="C7ZPG2"/>
<dbReference type="FunCoup" id="C7ZPG2">
    <property type="interactions" value="483"/>
</dbReference>
<dbReference type="STRING" id="660122.C7ZPG2"/>
<dbReference type="EnsemblFungi" id="NechaT50001">
    <property type="protein sequence ID" value="NechaP50001"/>
    <property type="gene ID" value="NechaG50001"/>
</dbReference>
<dbReference type="GeneID" id="9677787"/>
<dbReference type="KEGG" id="nhe:NECHADRAFT_50001"/>
<dbReference type="VEuPathDB" id="FungiDB:NECHADRAFT_50001"/>
<dbReference type="eggNOG" id="KOG3463">
    <property type="taxonomic scope" value="Eukaryota"/>
</dbReference>
<dbReference type="HOGENOM" id="CLU_112964_3_1_1"/>
<dbReference type="InParanoid" id="C7ZPG2"/>
<dbReference type="OMA" id="QYYELYR"/>
<dbReference type="OrthoDB" id="586585at2759"/>
<dbReference type="Proteomes" id="UP000005206">
    <property type="component" value="Chromosome 10"/>
</dbReference>
<dbReference type="GO" id="GO:0005672">
    <property type="term" value="C:transcription factor TFIIA complex"/>
    <property type="evidence" value="ECO:0007669"/>
    <property type="project" value="EnsemblFungi"/>
</dbReference>
<dbReference type="GO" id="GO:0000979">
    <property type="term" value="F:RNA polymerase II core promoter sequence-specific DNA binding"/>
    <property type="evidence" value="ECO:0007669"/>
    <property type="project" value="EnsemblFungi"/>
</dbReference>
<dbReference type="GO" id="GO:0017025">
    <property type="term" value="F:TBP-class protein binding"/>
    <property type="evidence" value="ECO:0007669"/>
    <property type="project" value="EnsemblFungi"/>
</dbReference>
<dbReference type="GO" id="GO:0060261">
    <property type="term" value="P:positive regulation of transcription initiation by RNA polymerase II"/>
    <property type="evidence" value="ECO:0007669"/>
    <property type="project" value="EnsemblFungi"/>
</dbReference>
<dbReference type="GO" id="GO:0051123">
    <property type="term" value="P:RNA polymerase II preinitiation complex assembly"/>
    <property type="evidence" value="ECO:0007669"/>
    <property type="project" value="EnsemblFungi"/>
</dbReference>
<dbReference type="CDD" id="cd10014">
    <property type="entry name" value="TFIIA_gamma_C"/>
    <property type="match status" value="1"/>
</dbReference>
<dbReference type="CDD" id="cd10145">
    <property type="entry name" value="TFIIA_gamma_N"/>
    <property type="match status" value="1"/>
</dbReference>
<dbReference type="FunFam" id="1.10.287.190:FF:000001">
    <property type="entry name" value="Transcription initiation factor IIA subunit 2"/>
    <property type="match status" value="1"/>
</dbReference>
<dbReference type="FunFam" id="2.30.18.10:FF:000003">
    <property type="entry name" value="Transcription initiation factor IIA subunit 2"/>
    <property type="match status" value="1"/>
</dbReference>
<dbReference type="Gene3D" id="2.30.18.10">
    <property type="entry name" value="Transcription factor IIA (TFIIA), beta-barrel domain"/>
    <property type="match status" value="1"/>
</dbReference>
<dbReference type="Gene3D" id="1.10.287.190">
    <property type="entry name" value="Transcription factor IIA gamma subunit, alpha-helical domain"/>
    <property type="match status" value="1"/>
</dbReference>
<dbReference type="InterPro" id="IPR009083">
    <property type="entry name" value="TFIIA_a-hlx"/>
</dbReference>
<dbReference type="InterPro" id="IPR009088">
    <property type="entry name" value="TFIIA_b-brl"/>
</dbReference>
<dbReference type="InterPro" id="IPR003194">
    <property type="entry name" value="TFIIA_gsu"/>
</dbReference>
<dbReference type="InterPro" id="IPR015871">
    <property type="entry name" value="TFIIA_gsu_C"/>
</dbReference>
<dbReference type="InterPro" id="IPR015872">
    <property type="entry name" value="TFIIA_gsu_N"/>
</dbReference>
<dbReference type="PANTHER" id="PTHR10966">
    <property type="entry name" value="TRANSCRIPTION INITIATION FACTOR IIA SUBUNIT 2"/>
    <property type="match status" value="1"/>
</dbReference>
<dbReference type="Pfam" id="PF02751">
    <property type="entry name" value="TFIIA_gamma_C"/>
    <property type="match status" value="1"/>
</dbReference>
<dbReference type="Pfam" id="PF02268">
    <property type="entry name" value="TFIIA_gamma_N"/>
    <property type="match status" value="1"/>
</dbReference>
<dbReference type="PIRSF" id="PIRSF009415">
    <property type="entry name" value="Hum_TFIIA_gamma"/>
    <property type="match status" value="1"/>
</dbReference>
<dbReference type="SUPFAM" id="SSF47396">
    <property type="entry name" value="Transcription factor IIA (TFIIA), alpha-helical domain"/>
    <property type="match status" value="1"/>
</dbReference>
<dbReference type="SUPFAM" id="SSF50784">
    <property type="entry name" value="Transcription factor IIA (TFIIA), beta-barrel domain"/>
    <property type="match status" value="1"/>
</dbReference>
<sequence>MATGAQSFYELYRRSSIGLALTDTLDDLISDERINPQLAMKILGNFDQAITEALQKNVKARLQFKGSLDTYRFCDEVWTFLIKNVTFKMDTGGQAVTANKVKIVSCNAKKPEGT</sequence>
<name>T2AG_FUSV7</name>
<evidence type="ECO:0000250" key="1"/>
<evidence type="ECO:0000305" key="2"/>
<protein>
    <recommendedName>
        <fullName>Transcription initiation factor IIA subunit 2</fullName>
    </recommendedName>
    <alternativeName>
        <fullName>General transcription factor IIA subunit 2</fullName>
    </alternativeName>
    <alternativeName>
        <fullName>Transcription initiation factor IIA small chain</fullName>
    </alternativeName>
</protein>
<accession>C7ZPG2</accession>
<reference key="1">
    <citation type="journal article" date="2009" name="PLoS Genet.">
        <title>The genome of Nectria haematococca: contribution of supernumerary chromosomes to gene expansion.</title>
        <authorList>
            <person name="Coleman J.J."/>
            <person name="Rounsley S.D."/>
            <person name="Rodriguez-Carres M."/>
            <person name="Kuo A."/>
            <person name="Wasmann C.C."/>
            <person name="Grimwood J."/>
            <person name="Schmutz J."/>
            <person name="Taga M."/>
            <person name="White G.J."/>
            <person name="Zhou S."/>
            <person name="Schwartz D.C."/>
            <person name="Freitag M."/>
            <person name="Ma L.-J."/>
            <person name="Danchin E.G.J."/>
            <person name="Henrissat B."/>
            <person name="Coutinho P.M."/>
            <person name="Nelson D.R."/>
            <person name="Straney D."/>
            <person name="Napoli C.A."/>
            <person name="Barker B.M."/>
            <person name="Gribskov M."/>
            <person name="Rep M."/>
            <person name="Kroken S."/>
            <person name="Molnar I."/>
            <person name="Rensing C."/>
            <person name="Kennell J.C."/>
            <person name="Zamora J."/>
            <person name="Farman M.L."/>
            <person name="Selker E.U."/>
            <person name="Salamov A."/>
            <person name="Shapiro H."/>
            <person name="Pangilinan J."/>
            <person name="Lindquist E."/>
            <person name="Lamers C."/>
            <person name="Grigoriev I.V."/>
            <person name="Geiser D.M."/>
            <person name="Covert S.F."/>
            <person name="Temporini E."/>
            <person name="VanEtten H.D."/>
        </authorList>
    </citation>
    <scope>NUCLEOTIDE SEQUENCE [LARGE SCALE GENOMIC DNA]</scope>
    <source>
        <strain>ATCC MYA-4622 / CBS 123669 / FGSC 9596 / NRRL 45880 / 77-13-4</strain>
    </source>
</reference>